<dbReference type="EC" id="2.7.1.148" evidence="1"/>
<dbReference type="EMBL" id="CP001110">
    <property type="protein sequence ID" value="ACF43344.1"/>
    <property type="molecule type" value="Genomic_DNA"/>
</dbReference>
<dbReference type="RefSeq" id="WP_012507838.1">
    <property type="nucleotide sequence ID" value="NC_011060.1"/>
</dbReference>
<dbReference type="SMR" id="B4SG33"/>
<dbReference type="STRING" id="324925.Ppha_1063"/>
<dbReference type="KEGG" id="pph:Ppha_1063"/>
<dbReference type="eggNOG" id="COG1947">
    <property type="taxonomic scope" value="Bacteria"/>
</dbReference>
<dbReference type="HOGENOM" id="CLU_053057_3_0_10"/>
<dbReference type="OrthoDB" id="9809438at2"/>
<dbReference type="UniPathway" id="UPA00056">
    <property type="reaction ID" value="UER00094"/>
</dbReference>
<dbReference type="Proteomes" id="UP000002724">
    <property type="component" value="Chromosome"/>
</dbReference>
<dbReference type="GO" id="GO:0050515">
    <property type="term" value="F:4-(cytidine 5'-diphospho)-2-C-methyl-D-erythritol kinase activity"/>
    <property type="evidence" value="ECO:0007669"/>
    <property type="project" value="UniProtKB-UniRule"/>
</dbReference>
<dbReference type="GO" id="GO:0005524">
    <property type="term" value="F:ATP binding"/>
    <property type="evidence" value="ECO:0007669"/>
    <property type="project" value="UniProtKB-UniRule"/>
</dbReference>
<dbReference type="GO" id="GO:0019288">
    <property type="term" value="P:isopentenyl diphosphate biosynthetic process, methylerythritol 4-phosphate pathway"/>
    <property type="evidence" value="ECO:0007669"/>
    <property type="project" value="UniProtKB-UniRule"/>
</dbReference>
<dbReference type="GO" id="GO:0016114">
    <property type="term" value="P:terpenoid biosynthetic process"/>
    <property type="evidence" value="ECO:0007669"/>
    <property type="project" value="InterPro"/>
</dbReference>
<dbReference type="Gene3D" id="3.30.230.10">
    <property type="match status" value="1"/>
</dbReference>
<dbReference type="Gene3D" id="3.30.70.890">
    <property type="entry name" value="GHMP kinase, C-terminal domain"/>
    <property type="match status" value="1"/>
</dbReference>
<dbReference type="HAMAP" id="MF_00061">
    <property type="entry name" value="IspE"/>
    <property type="match status" value="1"/>
</dbReference>
<dbReference type="InterPro" id="IPR013750">
    <property type="entry name" value="GHMP_kinase_C_dom"/>
</dbReference>
<dbReference type="InterPro" id="IPR036554">
    <property type="entry name" value="GHMP_kinase_C_sf"/>
</dbReference>
<dbReference type="InterPro" id="IPR006204">
    <property type="entry name" value="GHMP_kinase_N_dom"/>
</dbReference>
<dbReference type="InterPro" id="IPR004424">
    <property type="entry name" value="IspE"/>
</dbReference>
<dbReference type="InterPro" id="IPR020568">
    <property type="entry name" value="Ribosomal_Su5_D2-typ_SF"/>
</dbReference>
<dbReference type="InterPro" id="IPR014721">
    <property type="entry name" value="Ribsml_uS5_D2-typ_fold_subgr"/>
</dbReference>
<dbReference type="NCBIfam" id="TIGR00154">
    <property type="entry name" value="ispE"/>
    <property type="match status" value="1"/>
</dbReference>
<dbReference type="PANTHER" id="PTHR43527">
    <property type="entry name" value="4-DIPHOSPHOCYTIDYL-2-C-METHYL-D-ERYTHRITOL KINASE, CHLOROPLASTIC"/>
    <property type="match status" value="1"/>
</dbReference>
<dbReference type="PANTHER" id="PTHR43527:SF2">
    <property type="entry name" value="4-DIPHOSPHOCYTIDYL-2-C-METHYL-D-ERYTHRITOL KINASE, CHLOROPLASTIC"/>
    <property type="match status" value="1"/>
</dbReference>
<dbReference type="Pfam" id="PF08544">
    <property type="entry name" value="GHMP_kinases_C"/>
    <property type="match status" value="1"/>
</dbReference>
<dbReference type="Pfam" id="PF00288">
    <property type="entry name" value="GHMP_kinases_N"/>
    <property type="match status" value="1"/>
</dbReference>
<dbReference type="PIRSF" id="PIRSF010376">
    <property type="entry name" value="IspE"/>
    <property type="match status" value="1"/>
</dbReference>
<dbReference type="SUPFAM" id="SSF55060">
    <property type="entry name" value="GHMP Kinase, C-terminal domain"/>
    <property type="match status" value="1"/>
</dbReference>
<dbReference type="SUPFAM" id="SSF54211">
    <property type="entry name" value="Ribosomal protein S5 domain 2-like"/>
    <property type="match status" value="1"/>
</dbReference>
<feature type="chain" id="PRO_1000092102" description="4-diphosphocytidyl-2-C-methyl-D-erythritol kinase">
    <location>
        <begin position="1"/>
        <end position="287"/>
    </location>
</feature>
<feature type="active site" evidence="1">
    <location>
        <position position="11"/>
    </location>
</feature>
<feature type="active site" evidence="1">
    <location>
        <position position="135"/>
    </location>
</feature>
<feature type="binding site" evidence="1">
    <location>
        <begin position="93"/>
        <end position="103"/>
    </location>
    <ligand>
        <name>ATP</name>
        <dbReference type="ChEBI" id="CHEBI:30616"/>
    </ligand>
</feature>
<reference key="1">
    <citation type="submission" date="2008-06" db="EMBL/GenBank/DDBJ databases">
        <title>Complete sequence of Pelodictyon phaeoclathratiforme BU-1.</title>
        <authorList>
            <consortium name="US DOE Joint Genome Institute"/>
            <person name="Lucas S."/>
            <person name="Copeland A."/>
            <person name="Lapidus A."/>
            <person name="Glavina del Rio T."/>
            <person name="Dalin E."/>
            <person name="Tice H."/>
            <person name="Bruce D."/>
            <person name="Goodwin L."/>
            <person name="Pitluck S."/>
            <person name="Schmutz J."/>
            <person name="Larimer F."/>
            <person name="Land M."/>
            <person name="Hauser L."/>
            <person name="Kyrpides N."/>
            <person name="Mikhailova N."/>
            <person name="Liu Z."/>
            <person name="Li T."/>
            <person name="Zhao F."/>
            <person name="Overmann J."/>
            <person name="Bryant D.A."/>
            <person name="Richardson P."/>
        </authorList>
    </citation>
    <scope>NUCLEOTIDE SEQUENCE [LARGE SCALE GENOMIC DNA]</scope>
    <source>
        <strain>DSM 5477 / BU-1</strain>
    </source>
</reference>
<sequence>MHPLLVKSFAKINLGLLITAKRQDGYHTLETIFAPINWYDTIEFSDSEKISMSCSNSDLPVDDNNLCIKAARSLQQFAAVRKGIAMKLQKQVPFGAGLGGGSSDAATVLRVLNELWKVNASPAELHALAVKLGADVPYFLSMKGLAYATGIGDELDDLALTLPYYIVTVFPEEHIATVWAYKNFYSRFDRELPDLKKLLSELCLSGKKEGLPAFENDFEPAVFDHFPAVRKVKLTLLEAGSIFSSLSGSGSAVFGLFEREDEALAAMKLLPEAYRKNLTPPGFCMAQ</sequence>
<protein>
    <recommendedName>
        <fullName evidence="1">4-diphosphocytidyl-2-C-methyl-D-erythritol kinase</fullName>
        <shortName evidence="1">CMK</shortName>
        <ecNumber evidence="1">2.7.1.148</ecNumber>
    </recommendedName>
    <alternativeName>
        <fullName evidence="1">4-(cytidine-5'-diphospho)-2-C-methyl-D-erythritol kinase</fullName>
    </alternativeName>
</protein>
<evidence type="ECO:0000255" key="1">
    <source>
        <dbReference type="HAMAP-Rule" id="MF_00061"/>
    </source>
</evidence>
<accession>B4SG33</accession>
<comment type="function">
    <text evidence="1">Catalyzes the phosphorylation of the position 2 hydroxy group of 4-diphosphocytidyl-2C-methyl-D-erythritol.</text>
</comment>
<comment type="catalytic activity">
    <reaction evidence="1">
        <text>4-CDP-2-C-methyl-D-erythritol + ATP = 4-CDP-2-C-methyl-D-erythritol 2-phosphate + ADP + H(+)</text>
        <dbReference type="Rhea" id="RHEA:18437"/>
        <dbReference type="ChEBI" id="CHEBI:15378"/>
        <dbReference type="ChEBI" id="CHEBI:30616"/>
        <dbReference type="ChEBI" id="CHEBI:57823"/>
        <dbReference type="ChEBI" id="CHEBI:57919"/>
        <dbReference type="ChEBI" id="CHEBI:456216"/>
        <dbReference type="EC" id="2.7.1.148"/>
    </reaction>
</comment>
<comment type="pathway">
    <text evidence="1">Isoprenoid biosynthesis; isopentenyl diphosphate biosynthesis via DXP pathway; isopentenyl diphosphate from 1-deoxy-D-xylulose 5-phosphate: step 3/6.</text>
</comment>
<comment type="similarity">
    <text evidence="1">Belongs to the GHMP kinase family. IspE subfamily.</text>
</comment>
<keyword id="KW-0067">ATP-binding</keyword>
<keyword id="KW-0414">Isoprene biosynthesis</keyword>
<keyword id="KW-0418">Kinase</keyword>
<keyword id="KW-0547">Nucleotide-binding</keyword>
<keyword id="KW-1185">Reference proteome</keyword>
<keyword id="KW-0808">Transferase</keyword>
<name>ISPE_PELPB</name>
<proteinExistence type="inferred from homology"/>
<gene>
    <name evidence="1" type="primary">ispE</name>
    <name type="ordered locus">Ppha_1063</name>
</gene>
<organism>
    <name type="scientific">Pelodictyon phaeoclathratiforme (strain DSM 5477 / BU-1)</name>
    <dbReference type="NCBI Taxonomy" id="324925"/>
    <lineage>
        <taxon>Bacteria</taxon>
        <taxon>Pseudomonadati</taxon>
        <taxon>Chlorobiota</taxon>
        <taxon>Chlorobiia</taxon>
        <taxon>Chlorobiales</taxon>
        <taxon>Chlorobiaceae</taxon>
        <taxon>Chlorobium/Pelodictyon group</taxon>
        <taxon>Pelodictyon</taxon>
    </lineage>
</organism>